<protein>
    <recommendedName>
        <fullName evidence="1">Glutamyl-tRNA(Gln) amidotransferase subunit A</fullName>
        <shortName evidence="1">Glu-ADT subunit A</shortName>
        <ecNumber evidence="1">6.3.5.7</ecNumber>
    </recommendedName>
</protein>
<name>GATA_LISIN</name>
<comment type="function">
    <text evidence="1">Allows the formation of correctly charged Gln-tRNA(Gln) through the transamidation of misacylated Glu-tRNA(Gln) in organisms which lack glutaminyl-tRNA synthetase. The reaction takes place in the presence of glutamine and ATP through an activated gamma-phospho-Glu-tRNA(Gln).</text>
</comment>
<comment type="catalytic activity">
    <reaction evidence="1">
        <text>L-glutamyl-tRNA(Gln) + L-glutamine + ATP + H2O = L-glutaminyl-tRNA(Gln) + L-glutamate + ADP + phosphate + H(+)</text>
        <dbReference type="Rhea" id="RHEA:17521"/>
        <dbReference type="Rhea" id="RHEA-COMP:9681"/>
        <dbReference type="Rhea" id="RHEA-COMP:9684"/>
        <dbReference type="ChEBI" id="CHEBI:15377"/>
        <dbReference type="ChEBI" id="CHEBI:15378"/>
        <dbReference type="ChEBI" id="CHEBI:29985"/>
        <dbReference type="ChEBI" id="CHEBI:30616"/>
        <dbReference type="ChEBI" id="CHEBI:43474"/>
        <dbReference type="ChEBI" id="CHEBI:58359"/>
        <dbReference type="ChEBI" id="CHEBI:78520"/>
        <dbReference type="ChEBI" id="CHEBI:78521"/>
        <dbReference type="ChEBI" id="CHEBI:456216"/>
        <dbReference type="EC" id="6.3.5.7"/>
    </reaction>
</comment>
<comment type="subunit">
    <text evidence="1">Heterotrimer of A, B and C subunits.</text>
</comment>
<comment type="similarity">
    <text evidence="1">Belongs to the amidase family. GatA subfamily.</text>
</comment>
<dbReference type="EC" id="6.3.5.7" evidence="1"/>
<dbReference type="EMBL" id="AL596170">
    <property type="protein sequence ID" value="CAC97097.1"/>
    <property type="molecule type" value="Genomic_DNA"/>
</dbReference>
<dbReference type="PIR" id="AI1665">
    <property type="entry name" value="AI1665"/>
</dbReference>
<dbReference type="RefSeq" id="WP_010990995.1">
    <property type="nucleotide sequence ID" value="NC_003212.1"/>
</dbReference>
<dbReference type="SMR" id="Q92AQ3"/>
<dbReference type="STRING" id="272626.gene:17566222"/>
<dbReference type="KEGG" id="lin:gatA"/>
<dbReference type="eggNOG" id="COG0154">
    <property type="taxonomic scope" value="Bacteria"/>
</dbReference>
<dbReference type="HOGENOM" id="CLU_009600_0_3_9"/>
<dbReference type="OrthoDB" id="9811471at2"/>
<dbReference type="Proteomes" id="UP000002513">
    <property type="component" value="Chromosome"/>
</dbReference>
<dbReference type="GO" id="GO:0030956">
    <property type="term" value="C:glutamyl-tRNA(Gln) amidotransferase complex"/>
    <property type="evidence" value="ECO:0007669"/>
    <property type="project" value="InterPro"/>
</dbReference>
<dbReference type="GO" id="GO:0005524">
    <property type="term" value="F:ATP binding"/>
    <property type="evidence" value="ECO:0007669"/>
    <property type="project" value="UniProtKB-KW"/>
</dbReference>
<dbReference type="GO" id="GO:0050567">
    <property type="term" value="F:glutaminyl-tRNA synthase (glutamine-hydrolyzing) activity"/>
    <property type="evidence" value="ECO:0007669"/>
    <property type="project" value="UniProtKB-UniRule"/>
</dbReference>
<dbReference type="GO" id="GO:0006412">
    <property type="term" value="P:translation"/>
    <property type="evidence" value="ECO:0007669"/>
    <property type="project" value="UniProtKB-UniRule"/>
</dbReference>
<dbReference type="Gene3D" id="3.90.1300.10">
    <property type="entry name" value="Amidase signature (AS) domain"/>
    <property type="match status" value="1"/>
</dbReference>
<dbReference type="HAMAP" id="MF_00120">
    <property type="entry name" value="GatA"/>
    <property type="match status" value="1"/>
</dbReference>
<dbReference type="InterPro" id="IPR000120">
    <property type="entry name" value="Amidase"/>
</dbReference>
<dbReference type="InterPro" id="IPR020556">
    <property type="entry name" value="Amidase_CS"/>
</dbReference>
<dbReference type="InterPro" id="IPR023631">
    <property type="entry name" value="Amidase_dom"/>
</dbReference>
<dbReference type="InterPro" id="IPR036928">
    <property type="entry name" value="AS_sf"/>
</dbReference>
<dbReference type="InterPro" id="IPR004412">
    <property type="entry name" value="GatA"/>
</dbReference>
<dbReference type="NCBIfam" id="TIGR00132">
    <property type="entry name" value="gatA"/>
    <property type="match status" value="1"/>
</dbReference>
<dbReference type="PANTHER" id="PTHR11895:SF151">
    <property type="entry name" value="GLUTAMYL-TRNA(GLN) AMIDOTRANSFERASE SUBUNIT A"/>
    <property type="match status" value="1"/>
</dbReference>
<dbReference type="PANTHER" id="PTHR11895">
    <property type="entry name" value="TRANSAMIDASE"/>
    <property type="match status" value="1"/>
</dbReference>
<dbReference type="Pfam" id="PF01425">
    <property type="entry name" value="Amidase"/>
    <property type="match status" value="1"/>
</dbReference>
<dbReference type="SUPFAM" id="SSF75304">
    <property type="entry name" value="Amidase signature (AS) enzymes"/>
    <property type="match status" value="1"/>
</dbReference>
<dbReference type="PROSITE" id="PS00571">
    <property type="entry name" value="AMIDASES"/>
    <property type="match status" value="1"/>
</dbReference>
<accession>Q92AQ3</accession>
<proteinExistence type="inferred from homology"/>
<organism>
    <name type="scientific">Listeria innocua serovar 6a (strain ATCC BAA-680 / CLIP 11262)</name>
    <dbReference type="NCBI Taxonomy" id="272626"/>
    <lineage>
        <taxon>Bacteria</taxon>
        <taxon>Bacillati</taxon>
        <taxon>Bacillota</taxon>
        <taxon>Bacilli</taxon>
        <taxon>Bacillales</taxon>
        <taxon>Listeriaceae</taxon>
        <taxon>Listeria</taxon>
    </lineage>
</organism>
<feature type="chain" id="PRO_0000105173" description="Glutamyl-tRNA(Gln) amidotransferase subunit A">
    <location>
        <begin position="1"/>
        <end position="483"/>
    </location>
</feature>
<feature type="active site" description="Charge relay system" evidence="1">
    <location>
        <position position="77"/>
    </location>
</feature>
<feature type="active site" description="Charge relay system" evidence="1">
    <location>
        <position position="152"/>
    </location>
</feature>
<feature type="active site" description="Acyl-ester intermediate" evidence="1">
    <location>
        <position position="176"/>
    </location>
</feature>
<gene>
    <name evidence="1" type="primary">gatA</name>
    <name type="ordered locus">lin1867</name>
</gene>
<sequence>MGLFDFSVKELHDKLVKKEITPFDLVTESFNRIEAVEDKVGSFITLNKETALGVAEELGDAGIDPNNMLAGLPIGIKDNIVTKNLRTTAASKILENFDPIYDATVVSKLKNAQTINIGKLNMDEFAMGSSTETSYFHKTHNPWDLSRVPGGSSGGSASAVAAGEVLFSLGSDTGGSIRQPAAFCGVVGMKPTYGRVSRFGLIAFASSLDQIGPITKNVEDNAYLLEAISGLDANDSTSINQPVERFSDSLTGDIKGLRIGVPKEYLGEGVDPGVKQAVLDALKTLEKLGATWDEVSLPHSEYGVASYYILASSEASSNLSRFDGVRYGYRSPNATTLEELYTKTRSEGFGDEVKRRIMLGTYALSSGYYDAYYKKAQQARTLIKQDFVDVFKNYDVIIGPSSPTTAFKIDGMINDPITMYSNDILTVPINLAGVPAISVPCGFSEGLPVGLQIIGNYFEESLLYKVAHAFEQETTFHKEKPNL</sequence>
<keyword id="KW-0067">ATP-binding</keyword>
<keyword id="KW-0436">Ligase</keyword>
<keyword id="KW-0547">Nucleotide-binding</keyword>
<keyword id="KW-0648">Protein biosynthesis</keyword>
<reference key="1">
    <citation type="journal article" date="2001" name="Science">
        <title>Comparative genomics of Listeria species.</title>
        <authorList>
            <person name="Glaser P."/>
            <person name="Frangeul L."/>
            <person name="Buchrieser C."/>
            <person name="Rusniok C."/>
            <person name="Amend A."/>
            <person name="Baquero F."/>
            <person name="Berche P."/>
            <person name="Bloecker H."/>
            <person name="Brandt P."/>
            <person name="Chakraborty T."/>
            <person name="Charbit A."/>
            <person name="Chetouani F."/>
            <person name="Couve E."/>
            <person name="de Daruvar A."/>
            <person name="Dehoux P."/>
            <person name="Domann E."/>
            <person name="Dominguez-Bernal G."/>
            <person name="Duchaud E."/>
            <person name="Durant L."/>
            <person name="Dussurget O."/>
            <person name="Entian K.-D."/>
            <person name="Fsihi H."/>
            <person name="Garcia-del Portillo F."/>
            <person name="Garrido P."/>
            <person name="Gautier L."/>
            <person name="Goebel W."/>
            <person name="Gomez-Lopez N."/>
            <person name="Hain T."/>
            <person name="Hauf J."/>
            <person name="Jackson D."/>
            <person name="Jones L.-M."/>
            <person name="Kaerst U."/>
            <person name="Kreft J."/>
            <person name="Kuhn M."/>
            <person name="Kunst F."/>
            <person name="Kurapkat G."/>
            <person name="Madueno E."/>
            <person name="Maitournam A."/>
            <person name="Mata Vicente J."/>
            <person name="Ng E."/>
            <person name="Nedjari H."/>
            <person name="Nordsiek G."/>
            <person name="Novella S."/>
            <person name="de Pablos B."/>
            <person name="Perez-Diaz J.-C."/>
            <person name="Purcell R."/>
            <person name="Remmel B."/>
            <person name="Rose M."/>
            <person name="Schlueter T."/>
            <person name="Simoes N."/>
            <person name="Tierrez A."/>
            <person name="Vazquez-Boland J.-A."/>
            <person name="Voss H."/>
            <person name="Wehland J."/>
            <person name="Cossart P."/>
        </authorList>
    </citation>
    <scope>NUCLEOTIDE SEQUENCE [LARGE SCALE GENOMIC DNA]</scope>
    <source>
        <strain>ATCC BAA-680 / CLIP 11262</strain>
    </source>
</reference>
<evidence type="ECO:0000255" key="1">
    <source>
        <dbReference type="HAMAP-Rule" id="MF_00120"/>
    </source>
</evidence>